<protein>
    <recommendedName>
        <fullName>Pentalenolactone D synthase</fullName>
        <ecNumber>1.14.13.170</ecNumber>
    </recommendedName>
    <alternativeName>
        <fullName>Pentalenolactone biosynthesis protein E</fullName>
    </alternativeName>
</protein>
<proteinExistence type="evidence at protein level"/>
<sequence>MDLEAVREKYRQERDKRGVGRTYQFARGDFSRYARDPYTERREREPLTDEVDVAVVGAGIGGLLTGARLREETGLERIRLIDEAGDVGGTWYWNRFPGVRCDVESYVYMPLLEEIGTIPTEKYSTGPEIFAHLQRIAHRYGLYRDALFQTTVTELRWDEAAARWLVSTDRGDLFRARYVAMSIGLMHRPKLPGLPGLETFAGHSFHTSRWDFGYTGGDSTGGLTGLKDKRVGVIGTGSTTVQLAPHLAEWAERLYIFQRTPAAVDVRGNRPTPPGWADGLDAGWQQRRMENFHALTSGIPQDEDLVQDRWTQTTAELATAILPTGDTGGDPKERALAAERADFRKMEELRARIDSVVTDPATAAALKPYYRVYCKRPCFHDGYLQTFNRPNVTLVDTQGQGVERLTASGVVANGREYPVDCLIFATGYEHEFAVPYTERAGYDIVGRGGVRLSEKWAQGAHTLHGLQVHGFPNCFILSKVQAGRHVNIAYMLGEQTRHLAHIVKCVEERGHRVVEASEAGEKEWVEEILRLASGDLDFLENCTPGLYNNEGDPGGLPLLNSSYGGGSVEFVNILRRWREAGDLAGLELR</sequence>
<feature type="chain" id="PRO_0000422004" description="Pentalenolactone D synthase">
    <location>
        <begin position="1"/>
        <end position="589"/>
    </location>
</feature>
<feature type="binding site" evidence="1">
    <location>
        <begin position="60"/>
        <end position="61"/>
    </location>
    <ligand>
        <name>FAD</name>
        <dbReference type="ChEBI" id="CHEBI:57692"/>
    </ligand>
</feature>
<feature type="binding site" evidence="1">
    <location>
        <begin position="82"/>
        <end position="83"/>
    </location>
    <ligand>
        <name>FAD</name>
        <dbReference type="ChEBI" id="CHEBI:57692"/>
    </ligand>
</feature>
<feature type="binding site" evidence="1">
    <location>
        <begin position="90"/>
        <end position="91"/>
    </location>
    <ligand>
        <name>FAD</name>
        <dbReference type="ChEBI" id="CHEBI:57692"/>
    </ligand>
</feature>
<feature type="binding site" evidence="1">
    <location>
        <begin position="102"/>
        <end position="103"/>
    </location>
    <ligand>
        <name>FAD</name>
        <dbReference type="ChEBI" id="CHEBI:57692"/>
    </ligand>
</feature>
<feature type="binding site" evidence="1">
    <location>
        <position position="108"/>
    </location>
    <ligand>
        <name>FAD</name>
        <dbReference type="ChEBI" id="CHEBI:57692"/>
    </ligand>
</feature>
<feature type="binding site" evidence="1">
    <location>
        <position position="152"/>
    </location>
    <ligand>
        <name>FAD</name>
        <dbReference type="ChEBI" id="CHEBI:57692"/>
    </ligand>
</feature>
<feature type="binding site" evidence="1">
    <location>
        <position position="491"/>
    </location>
    <ligand>
        <name>FAD</name>
        <dbReference type="ChEBI" id="CHEBI:57692"/>
    </ligand>
</feature>
<feature type="site" description="Transition state stabilizer" evidence="2">
    <location>
        <position position="376"/>
    </location>
</feature>
<dbReference type="EC" id="1.14.13.170"/>
<dbReference type="EMBL" id="HQ292065">
    <property type="protein sequence ID" value="ADO85575.1"/>
    <property type="molecule type" value="Genomic_DNA"/>
</dbReference>
<dbReference type="SMR" id="E3VWI7"/>
<dbReference type="KEGG" id="ag:ADO85575"/>
<dbReference type="UniPathway" id="UPA00974"/>
<dbReference type="GO" id="GO:0102285">
    <property type="term" value="F:1-deoxy-11-oxopentalenate oxygenase activity"/>
    <property type="evidence" value="ECO:0007669"/>
    <property type="project" value="UniProtKB-EC"/>
</dbReference>
<dbReference type="GO" id="GO:0071949">
    <property type="term" value="F:FAD binding"/>
    <property type="evidence" value="ECO:0000314"/>
    <property type="project" value="UniProtKB"/>
</dbReference>
<dbReference type="GO" id="GO:0016709">
    <property type="term" value="F:oxidoreductase activity, acting on paired donors, with incorporation or reduction of molecular oxygen, NAD(P)H as one donor, and incorporation of one atom of oxygen"/>
    <property type="evidence" value="ECO:0000314"/>
    <property type="project" value="UniProtKB"/>
</dbReference>
<dbReference type="GO" id="GO:0017000">
    <property type="term" value="P:antibiotic biosynthetic process"/>
    <property type="evidence" value="ECO:0007669"/>
    <property type="project" value="UniProtKB-KW"/>
</dbReference>
<dbReference type="GO" id="GO:1901780">
    <property type="term" value="P:pentalenolactone biosynthetic process"/>
    <property type="evidence" value="ECO:0000314"/>
    <property type="project" value="UniProtKB"/>
</dbReference>
<dbReference type="FunFam" id="3.50.50.60:FF:000314">
    <property type="entry name" value="Baeyer-Villiger monooxygenase"/>
    <property type="match status" value="1"/>
</dbReference>
<dbReference type="FunFam" id="3.50.50.60:FF:000341">
    <property type="entry name" value="Baeyer-Villiger monooxygenase"/>
    <property type="match status" value="1"/>
</dbReference>
<dbReference type="Gene3D" id="3.50.50.60">
    <property type="entry name" value="FAD/NAD(P)-binding domain"/>
    <property type="match status" value="3"/>
</dbReference>
<dbReference type="InterPro" id="IPR050775">
    <property type="entry name" value="FAD-binding_Monooxygenases"/>
</dbReference>
<dbReference type="InterPro" id="IPR036188">
    <property type="entry name" value="FAD/NAD-bd_sf"/>
</dbReference>
<dbReference type="InterPro" id="IPR054972">
    <property type="entry name" value="Neo-PentlctneDsynPtlE"/>
</dbReference>
<dbReference type="NCBIfam" id="NF045818">
    <property type="entry name" value="Neo-PentlctneDsynPtlE"/>
    <property type="match status" value="1"/>
</dbReference>
<dbReference type="PANTHER" id="PTHR43098:SF4">
    <property type="entry name" value="BLR3857 PROTEIN"/>
    <property type="match status" value="1"/>
</dbReference>
<dbReference type="PANTHER" id="PTHR43098">
    <property type="entry name" value="L-ORNITHINE N(5)-MONOOXYGENASE-RELATED"/>
    <property type="match status" value="1"/>
</dbReference>
<dbReference type="Pfam" id="PF13450">
    <property type="entry name" value="NAD_binding_8"/>
    <property type="match status" value="1"/>
</dbReference>
<dbReference type="SUPFAM" id="SSF51905">
    <property type="entry name" value="FAD/NAD(P)-binding domain"/>
    <property type="match status" value="1"/>
</dbReference>
<comment type="function">
    <text evidence="3">Catalyzes the flavin-dependent Baeyer-Villiger oxidation of 1-deoxy-11-oxopentalenic acid to pentalenolactone D in the biosynthesis of pentalenolactone antibiotic.</text>
</comment>
<comment type="catalytic activity">
    <reaction evidence="3">
        <text>1-deoxy-11-oxopentalenate + NADPH + O2 + H(+) = pentalenolactone D + NADP(+) + H2O</text>
        <dbReference type="Rhea" id="RHEA:34635"/>
        <dbReference type="ChEBI" id="CHEBI:15377"/>
        <dbReference type="ChEBI" id="CHEBI:15378"/>
        <dbReference type="ChEBI" id="CHEBI:15379"/>
        <dbReference type="ChEBI" id="CHEBI:57783"/>
        <dbReference type="ChEBI" id="CHEBI:58349"/>
        <dbReference type="ChEBI" id="CHEBI:70780"/>
        <dbReference type="ChEBI" id="CHEBI:70787"/>
        <dbReference type="EC" id="1.14.13.170"/>
    </reaction>
</comment>
<comment type="cofactor">
    <cofactor evidence="3">
        <name>FAD</name>
        <dbReference type="ChEBI" id="CHEBI:57692"/>
    </cofactor>
    <text evidence="3">Binds 1 FAD per subunit.</text>
</comment>
<comment type="pathway">
    <text evidence="3">Antibiotic biosynthesis; pentalenolactone biosynthesis.</text>
</comment>
<comment type="similarity">
    <text evidence="4">Belongs to the FAD-binding monooxygenase family.</text>
</comment>
<gene>
    <name type="primary">pntE</name>
</gene>
<evidence type="ECO:0000250" key="1"/>
<evidence type="ECO:0000255" key="2"/>
<evidence type="ECO:0000269" key="3">
    <source>
    </source>
</evidence>
<evidence type="ECO:0000305" key="4"/>
<keyword id="KW-0045">Antibiotic biosynthesis</keyword>
<keyword id="KW-0274">FAD</keyword>
<keyword id="KW-0285">Flavoprotein</keyword>
<keyword id="KW-0503">Monooxygenase</keyword>
<keyword id="KW-0521">NADP</keyword>
<keyword id="KW-0560">Oxidoreductase</keyword>
<reference key="1">
    <citation type="journal article" date="2011" name="J. Am. Chem. Soc.">
        <title>Genome mining in streptomyces. Discovery of an unprecedented P450-catalyzed oxidative rearrangement that is the final step in the biosynthesis of pentalenolactone.</title>
        <authorList>
            <person name="Zhu D."/>
            <person name="Seo M.J."/>
            <person name="Ikeda H."/>
            <person name="Cane D.E."/>
        </authorList>
    </citation>
    <scope>NUCLEOTIDE SEQUENCE [GENOMIC DNA]</scope>
    <source>
        <strain>Tu469</strain>
    </source>
</reference>
<reference key="2">
    <citation type="journal article" date="2011" name="Biochemistry">
        <title>Genome mining in Streptomyces. Elucidation of the role of Baeyer-Villiger monooxygenases and non-heme iron-dependent dehydrogenase/oxygenases in the final steps of the biosynthesis of pentalenolactone and neopentalenolactone.</title>
        <authorList>
            <person name="Seo M.J."/>
            <person name="Zhu D."/>
            <person name="Endo S."/>
            <person name="Ikeda H."/>
            <person name="Cane D.E."/>
        </authorList>
    </citation>
    <scope>FUNCTION</scope>
    <scope>CATALYTIC ACTIVITY</scope>
    <scope>PATHWAY</scope>
    <scope>COFACTOR</scope>
    <source>
        <strain>Tu469</strain>
    </source>
</reference>
<accession>E3VWI7</accession>
<organism>
    <name type="scientific">Streptomyces arenae</name>
    <dbReference type="NCBI Taxonomy" id="29301"/>
    <lineage>
        <taxon>Bacteria</taxon>
        <taxon>Bacillati</taxon>
        <taxon>Actinomycetota</taxon>
        <taxon>Actinomycetes</taxon>
        <taxon>Kitasatosporales</taxon>
        <taxon>Streptomycetaceae</taxon>
        <taxon>Streptomyces</taxon>
    </lineage>
</organism>
<name>PNTE_STRAE</name>